<organism>
    <name type="scientific">Arabidopsis thaliana</name>
    <name type="common">Mouse-ear cress</name>
    <dbReference type="NCBI Taxonomy" id="3702"/>
    <lineage>
        <taxon>Eukaryota</taxon>
        <taxon>Viridiplantae</taxon>
        <taxon>Streptophyta</taxon>
        <taxon>Embryophyta</taxon>
        <taxon>Tracheophyta</taxon>
        <taxon>Spermatophyta</taxon>
        <taxon>Magnoliopsida</taxon>
        <taxon>eudicotyledons</taxon>
        <taxon>Gunneridae</taxon>
        <taxon>Pentapetalae</taxon>
        <taxon>rosids</taxon>
        <taxon>malvids</taxon>
        <taxon>Brassicales</taxon>
        <taxon>Brassicaceae</taxon>
        <taxon>Camelineae</taxon>
        <taxon>Arabidopsis</taxon>
    </lineage>
</organism>
<gene>
    <name type="primary">HHP3</name>
    <name type="ordered locus">At2g24150</name>
    <name type="ORF">F27D4.6</name>
</gene>
<dbReference type="EMBL" id="AC005967">
    <property type="protein sequence ID" value="AAD03376.2"/>
    <property type="molecule type" value="Genomic_DNA"/>
</dbReference>
<dbReference type="EMBL" id="CP002685">
    <property type="protein sequence ID" value="AEC07534.1"/>
    <property type="molecule type" value="Genomic_DNA"/>
</dbReference>
<dbReference type="EMBL" id="AF325070">
    <property type="protein sequence ID" value="AAK17138.1"/>
    <property type="molecule type" value="mRNA"/>
</dbReference>
<dbReference type="EMBL" id="AF370179">
    <property type="protein sequence ID" value="AAK43994.1"/>
    <property type="molecule type" value="mRNA"/>
</dbReference>
<dbReference type="EMBL" id="BT001975">
    <property type="protein sequence ID" value="AAN71974.1"/>
    <property type="molecule type" value="mRNA"/>
</dbReference>
<dbReference type="PIR" id="B84633">
    <property type="entry name" value="B84633"/>
</dbReference>
<dbReference type="RefSeq" id="NP_565564.1">
    <property type="nucleotide sequence ID" value="NM_127976.5"/>
</dbReference>
<dbReference type="SMR" id="Q9ZUH8"/>
<dbReference type="FunCoup" id="Q9ZUH8">
    <property type="interactions" value="2636"/>
</dbReference>
<dbReference type="STRING" id="3702.Q9ZUH8"/>
<dbReference type="PaxDb" id="3702-AT2G24150.1"/>
<dbReference type="ProteomicsDB" id="228801"/>
<dbReference type="EnsemblPlants" id="AT2G24150.1">
    <property type="protein sequence ID" value="AT2G24150.1"/>
    <property type="gene ID" value="AT2G24150"/>
</dbReference>
<dbReference type="GeneID" id="816949"/>
<dbReference type="Gramene" id="AT2G24150.1">
    <property type="protein sequence ID" value="AT2G24150.1"/>
    <property type="gene ID" value="AT2G24150"/>
</dbReference>
<dbReference type="KEGG" id="ath:AT2G24150"/>
<dbReference type="Araport" id="AT2G24150"/>
<dbReference type="TAIR" id="AT2G24150">
    <property type="gene designation" value="HHP3"/>
</dbReference>
<dbReference type="eggNOG" id="KOG0748">
    <property type="taxonomic scope" value="Eukaryota"/>
</dbReference>
<dbReference type="HOGENOM" id="CLU_023075_4_0_1"/>
<dbReference type="InParanoid" id="Q9ZUH8"/>
<dbReference type="OMA" id="RKIYWSM"/>
<dbReference type="PhylomeDB" id="Q9ZUH8"/>
<dbReference type="PRO" id="PR:Q9ZUH8"/>
<dbReference type="Proteomes" id="UP000006548">
    <property type="component" value="Chromosome 2"/>
</dbReference>
<dbReference type="ExpressionAtlas" id="Q9ZUH8">
    <property type="expression patterns" value="baseline and differential"/>
</dbReference>
<dbReference type="GO" id="GO:0016020">
    <property type="term" value="C:membrane"/>
    <property type="evidence" value="ECO:0007669"/>
    <property type="project" value="UniProtKB-SubCell"/>
</dbReference>
<dbReference type="GO" id="GO:0009725">
    <property type="term" value="P:response to hormone"/>
    <property type="evidence" value="ECO:0000270"/>
    <property type="project" value="TAIR"/>
</dbReference>
<dbReference type="GO" id="GO:0006979">
    <property type="term" value="P:response to oxidative stress"/>
    <property type="evidence" value="ECO:0000315"/>
    <property type="project" value="TAIR"/>
</dbReference>
<dbReference type="GO" id="GO:0009744">
    <property type="term" value="P:response to sucrose"/>
    <property type="evidence" value="ECO:0000270"/>
    <property type="project" value="TAIR"/>
</dbReference>
<dbReference type="InterPro" id="IPR004254">
    <property type="entry name" value="AdipoR/HlyIII-related"/>
</dbReference>
<dbReference type="PANTHER" id="PTHR20855">
    <property type="entry name" value="ADIPOR/PROGESTIN RECEPTOR-RELATED"/>
    <property type="match status" value="1"/>
</dbReference>
<dbReference type="PANTHER" id="PTHR20855:SF108">
    <property type="entry name" value="HEPTAHELICAL TRANSMEMBRANE PROTEIN 3"/>
    <property type="match status" value="1"/>
</dbReference>
<dbReference type="Pfam" id="PF03006">
    <property type="entry name" value="HlyIII"/>
    <property type="match status" value="1"/>
</dbReference>
<proteinExistence type="evidence at transcript level"/>
<comment type="function">
    <text evidence="1">May play a role in abiotic stress response.</text>
</comment>
<comment type="subcellular location">
    <subcellularLocation>
        <location evidence="4">Membrane</location>
        <topology evidence="4">Multi-pass membrane protein</topology>
    </subcellularLocation>
</comment>
<comment type="tissue specificity">
    <text evidence="3">Expressed in roots and flowers.</text>
</comment>
<comment type="similarity">
    <text evidence="4">Belongs to the ADIPOR family.</text>
</comment>
<accession>Q9ZUH8</accession>
<accession>Q94K90</accession>
<accession>Q9C5R3</accession>
<feature type="chain" id="PRO_0000430049" description="Heptahelical transmembrane protein 3">
    <location>
        <begin position="1"/>
        <end position="344"/>
    </location>
</feature>
<feature type="topological domain" description="Cytoplasmic" evidence="2">
    <location>
        <begin position="1"/>
        <end position="76"/>
    </location>
</feature>
<feature type="transmembrane region" description="Helical" evidence="2">
    <location>
        <begin position="77"/>
        <end position="97"/>
    </location>
</feature>
<feature type="topological domain" description="Extracellular" evidence="2">
    <location>
        <begin position="98"/>
        <end position="147"/>
    </location>
</feature>
<feature type="transmembrane region" description="Helical" evidence="2">
    <location>
        <begin position="148"/>
        <end position="168"/>
    </location>
</feature>
<feature type="topological domain" description="Cytoplasmic" evidence="2">
    <location>
        <begin position="169"/>
        <end position="184"/>
    </location>
</feature>
<feature type="transmembrane region" description="Helical" evidence="2">
    <location>
        <begin position="185"/>
        <end position="205"/>
    </location>
</feature>
<feature type="topological domain" description="Extracellular" evidence="2">
    <location>
        <begin position="206"/>
        <end position="210"/>
    </location>
</feature>
<feature type="transmembrane region" description="Helical" evidence="2">
    <location>
        <begin position="211"/>
        <end position="231"/>
    </location>
</feature>
<feature type="topological domain" description="Cytoplasmic" evidence="2">
    <location>
        <begin position="232"/>
        <end position="244"/>
    </location>
</feature>
<feature type="transmembrane region" description="Helical" evidence="2">
    <location>
        <begin position="245"/>
        <end position="265"/>
    </location>
</feature>
<feature type="topological domain" description="Extracellular" evidence="2">
    <location>
        <begin position="266"/>
        <end position="269"/>
    </location>
</feature>
<feature type="transmembrane region" description="Helical" evidence="2">
    <location>
        <begin position="270"/>
        <end position="290"/>
    </location>
</feature>
<feature type="topological domain" description="Cytoplasmic" evidence="2">
    <location>
        <begin position="291"/>
        <end position="312"/>
    </location>
</feature>
<feature type="transmembrane region" description="Helical" evidence="2">
    <location>
        <begin position="313"/>
        <end position="333"/>
    </location>
</feature>
<feature type="topological domain" description="Extracellular" evidence="2">
    <location>
        <begin position="334"/>
        <end position="344"/>
    </location>
</feature>
<keyword id="KW-0472">Membrane</keyword>
<keyword id="KW-1185">Reference proteome</keyword>
<keyword id="KW-0346">Stress response</keyword>
<keyword id="KW-0812">Transmembrane</keyword>
<keyword id="KW-1133">Transmembrane helix</keyword>
<sequence>MKRRRSAKKSPAMVTVTDWKGLDCGEETRIVRRLMKFEDLPEYLKDNEFIHNHYRCQWSLKDTFLSAFSWHNETLNIWTHLIGFGIFLWMTVVSCLETTEISLAGVFNGMAGVRICLSSNQTLLHDSNVTHHISCLTSQGEAIPKWPWLVYLVGAMGCLICSSVSHLLACHSKRFNVFFWRLDYAGISLMIVASFFAPIYYAFSCHPNFRLLYLSSISILGLLAIITLLSPALSTPRFRPFRANLFLAMGSSAVIPATHVLCLYWDHPNVFIALGYEIATALSYFVGATFYVSRVPERWKPGAFDMAGHSHQIFHVFVVMGALAHCVTTLLIIDFSRASPSCGF</sequence>
<evidence type="ECO:0000250" key="1"/>
<evidence type="ECO:0000255" key="2"/>
<evidence type="ECO:0000269" key="3">
    <source>
    </source>
</evidence>
<evidence type="ECO:0000305" key="4"/>
<reference key="1">
    <citation type="journal article" date="1999" name="Nature">
        <title>Sequence and analysis of chromosome 2 of the plant Arabidopsis thaliana.</title>
        <authorList>
            <person name="Lin X."/>
            <person name="Kaul S."/>
            <person name="Rounsley S.D."/>
            <person name="Shea T.P."/>
            <person name="Benito M.-I."/>
            <person name="Town C.D."/>
            <person name="Fujii C.Y."/>
            <person name="Mason T.M."/>
            <person name="Bowman C.L."/>
            <person name="Barnstead M.E."/>
            <person name="Feldblyum T.V."/>
            <person name="Buell C.R."/>
            <person name="Ketchum K.A."/>
            <person name="Lee J.J."/>
            <person name="Ronning C.M."/>
            <person name="Koo H.L."/>
            <person name="Moffat K.S."/>
            <person name="Cronin L.A."/>
            <person name="Shen M."/>
            <person name="Pai G."/>
            <person name="Van Aken S."/>
            <person name="Umayam L."/>
            <person name="Tallon L.J."/>
            <person name="Gill J.E."/>
            <person name="Adams M.D."/>
            <person name="Carrera A.J."/>
            <person name="Creasy T.H."/>
            <person name="Goodman H.M."/>
            <person name="Somerville C.R."/>
            <person name="Copenhaver G.P."/>
            <person name="Preuss D."/>
            <person name="Nierman W.C."/>
            <person name="White O."/>
            <person name="Eisen J.A."/>
            <person name="Salzberg S.L."/>
            <person name="Fraser C.M."/>
            <person name="Venter J.C."/>
        </authorList>
    </citation>
    <scope>NUCLEOTIDE SEQUENCE [LARGE SCALE GENOMIC DNA]</scope>
    <source>
        <strain>cv. Columbia</strain>
    </source>
</reference>
<reference key="2">
    <citation type="journal article" date="2017" name="Plant J.">
        <title>Araport11: a complete reannotation of the Arabidopsis thaliana reference genome.</title>
        <authorList>
            <person name="Cheng C.Y."/>
            <person name="Krishnakumar V."/>
            <person name="Chan A.P."/>
            <person name="Thibaud-Nissen F."/>
            <person name="Schobel S."/>
            <person name="Town C.D."/>
        </authorList>
    </citation>
    <scope>GENOME REANNOTATION</scope>
    <source>
        <strain>cv. Columbia</strain>
    </source>
</reference>
<reference key="3">
    <citation type="journal article" date="2003" name="Science">
        <title>Empirical analysis of transcriptional activity in the Arabidopsis genome.</title>
        <authorList>
            <person name="Yamada K."/>
            <person name="Lim J."/>
            <person name="Dale J.M."/>
            <person name="Chen H."/>
            <person name="Shinn P."/>
            <person name="Palm C.J."/>
            <person name="Southwick A.M."/>
            <person name="Wu H.C."/>
            <person name="Kim C.J."/>
            <person name="Nguyen M."/>
            <person name="Pham P.K."/>
            <person name="Cheuk R.F."/>
            <person name="Karlin-Newmann G."/>
            <person name="Liu S.X."/>
            <person name="Lam B."/>
            <person name="Sakano H."/>
            <person name="Wu T."/>
            <person name="Yu G."/>
            <person name="Miranda M."/>
            <person name="Quach H.L."/>
            <person name="Tripp M."/>
            <person name="Chang C.H."/>
            <person name="Lee J.M."/>
            <person name="Toriumi M.J."/>
            <person name="Chan M.M."/>
            <person name="Tang C.C."/>
            <person name="Onodera C.S."/>
            <person name="Deng J.M."/>
            <person name="Akiyama K."/>
            <person name="Ansari Y."/>
            <person name="Arakawa T."/>
            <person name="Banh J."/>
            <person name="Banno F."/>
            <person name="Bowser L."/>
            <person name="Brooks S.Y."/>
            <person name="Carninci P."/>
            <person name="Chao Q."/>
            <person name="Choy N."/>
            <person name="Enju A."/>
            <person name="Goldsmith A.D."/>
            <person name="Gurjal M."/>
            <person name="Hansen N.F."/>
            <person name="Hayashizaki Y."/>
            <person name="Johnson-Hopson C."/>
            <person name="Hsuan V.W."/>
            <person name="Iida K."/>
            <person name="Karnes M."/>
            <person name="Khan S."/>
            <person name="Koesema E."/>
            <person name="Ishida J."/>
            <person name="Jiang P.X."/>
            <person name="Jones T."/>
            <person name="Kawai J."/>
            <person name="Kamiya A."/>
            <person name="Meyers C."/>
            <person name="Nakajima M."/>
            <person name="Narusaka M."/>
            <person name="Seki M."/>
            <person name="Sakurai T."/>
            <person name="Satou M."/>
            <person name="Tamse R."/>
            <person name="Vaysberg M."/>
            <person name="Wallender E.K."/>
            <person name="Wong C."/>
            <person name="Yamamura Y."/>
            <person name="Yuan S."/>
            <person name="Shinozaki K."/>
            <person name="Davis R.W."/>
            <person name="Theologis A."/>
            <person name="Ecker J.R."/>
        </authorList>
    </citation>
    <scope>NUCLEOTIDE SEQUENCE [LARGE SCALE MRNA]</scope>
    <source>
        <strain>cv. Columbia</strain>
    </source>
</reference>
<reference key="4">
    <citation type="journal article" date="2005" name="J. Exp. Bot.">
        <title>A novel gene family in Arabidopsis encoding putative heptahelical transmembrane proteins homologous to human adiponectin receptors and progestin receptors.</title>
        <authorList>
            <person name="Hsieh M.H."/>
            <person name="Goodman H.M."/>
        </authorList>
    </citation>
    <scope>GENE FAMILY</scope>
    <scope>NOMENCLATURE</scope>
    <scope>TISSUE SPECIFICITY</scope>
</reference>
<protein>
    <recommendedName>
        <fullName>Heptahelical transmembrane protein 3</fullName>
    </recommendedName>
    <alternativeName>
        <fullName>PAQR family protein HHP3</fullName>
    </alternativeName>
</protein>
<name>HHP3_ARATH</name>